<accession>Q657B3</accession>
<accession>Q0JLT4</accession>
<comment type="sequence caution" evidence="3">
    <conflict type="erroneous gene model prediction">
        <sequence resource="EMBL-CDS" id="BAF05294"/>
    </conflict>
</comment>
<dbReference type="EMBL" id="AP003308">
    <property type="protein sequence ID" value="BAD45097.1"/>
    <property type="molecule type" value="Genomic_DNA"/>
</dbReference>
<dbReference type="EMBL" id="AP008207">
    <property type="protein sequence ID" value="BAF05294.2"/>
    <property type="status" value="ALT_SEQ"/>
    <property type="molecule type" value="Genomic_DNA"/>
</dbReference>
<dbReference type="EMBL" id="AP014957">
    <property type="status" value="NOT_ANNOTATED_CDS"/>
    <property type="molecule type" value="Genomic_DNA"/>
</dbReference>
<dbReference type="FunCoup" id="Q657B3">
    <property type="interactions" value="50"/>
</dbReference>
<dbReference type="STRING" id="39947.Q657B3"/>
<dbReference type="PaxDb" id="39947-Q657B3"/>
<dbReference type="KEGG" id="dosa:Os01g0572100"/>
<dbReference type="KEGG" id="osa:4326353"/>
<dbReference type="eggNOG" id="KOG1040">
    <property type="taxonomic scope" value="Eukaryota"/>
</dbReference>
<dbReference type="HOGENOM" id="CLU_1217434_0_0_1"/>
<dbReference type="InParanoid" id="Q657B3"/>
<dbReference type="OrthoDB" id="411372at2759"/>
<dbReference type="Proteomes" id="UP000000763">
    <property type="component" value="Chromosome 1"/>
</dbReference>
<dbReference type="Proteomes" id="UP000059680">
    <property type="component" value="Chromosome 1"/>
</dbReference>
<dbReference type="GO" id="GO:0005634">
    <property type="term" value="C:nucleus"/>
    <property type="evidence" value="ECO:0000318"/>
    <property type="project" value="GO_Central"/>
</dbReference>
<dbReference type="GO" id="GO:0003677">
    <property type="term" value="F:DNA binding"/>
    <property type="evidence" value="ECO:0007669"/>
    <property type="project" value="UniProtKB-KW"/>
</dbReference>
<dbReference type="GO" id="GO:0003723">
    <property type="term" value="F:RNA binding"/>
    <property type="evidence" value="ECO:0007669"/>
    <property type="project" value="InterPro"/>
</dbReference>
<dbReference type="GO" id="GO:0008270">
    <property type="term" value="F:zinc ion binding"/>
    <property type="evidence" value="ECO:0007669"/>
    <property type="project" value="UniProtKB-KW"/>
</dbReference>
<dbReference type="GO" id="GO:0045892">
    <property type="term" value="P:negative regulation of DNA-templated transcription"/>
    <property type="evidence" value="ECO:0007669"/>
    <property type="project" value="InterPro"/>
</dbReference>
<dbReference type="FunFam" id="4.10.1000.10:FF:000095">
    <property type="entry name" value="C3H-type transcription factor"/>
    <property type="match status" value="1"/>
</dbReference>
<dbReference type="Gene3D" id="4.10.1000.10">
    <property type="entry name" value="Zinc finger, CCCH-type"/>
    <property type="match status" value="2"/>
</dbReference>
<dbReference type="InterPro" id="IPR045124">
    <property type="entry name" value="Su(sable)-like"/>
</dbReference>
<dbReference type="InterPro" id="IPR000571">
    <property type="entry name" value="Znf_CCCH"/>
</dbReference>
<dbReference type="InterPro" id="IPR036855">
    <property type="entry name" value="Znf_CCCH_sf"/>
</dbReference>
<dbReference type="PANTHER" id="PTHR13119:SF12">
    <property type="entry name" value="PROTEIN SUPPRESSOR OF SABLE"/>
    <property type="match status" value="1"/>
</dbReference>
<dbReference type="PANTHER" id="PTHR13119">
    <property type="entry name" value="ZINC FINGER CCCH DOMAIN-CONTAINING PROTEI"/>
    <property type="match status" value="1"/>
</dbReference>
<dbReference type="Pfam" id="PF00642">
    <property type="entry name" value="zf-CCCH"/>
    <property type="match status" value="1"/>
</dbReference>
<dbReference type="Pfam" id="PF14608">
    <property type="entry name" value="zf-CCCH_2"/>
    <property type="match status" value="2"/>
</dbReference>
<dbReference type="SMART" id="SM00356">
    <property type="entry name" value="ZnF_C3H1"/>
    <property type="match status" value="3"/>
</dbReference>
<dbReference type="SUPFAM" id="SSF90229">
    <property type="entry name" value="CCCH zinc finger"/>
    <property type="match status" value="3"/>
</dbReference>
<dbReference type="PROSITE" id="PS50103">
    <property type="entry name" value="ZF_C3H1"/>
    <property type="match status" value="3"/>
</dbReference>
<keyword id="KW-0238">DNA-binding</keyword>
<keyword id="KW-0479">Metal-binding</keyword>
<keyword id="KW-1185">Reference proteome</keyword>
<keyword id="KW-0677">Repeat</keyword>
<keyword id="KW-0862">Zinc</keyword>
<keyword id="KW-0863">Zinc-finger</keyword>
<gene>
    <name type="ordered locus">Os01g0572100</name>
    <name type="ordered locus">LOC_Os01g39100</name>
    <name type="ORF">B1129G05.17</name>
</gene>
<sequence>MEEPSPVPPAAAPASLAAAPPTTDVLSRRRAHLDSASYRALSRLFSHCLHLHPPRHAARPDAEVEPAAAAAIPPGGSGGLPHGDSPPPADVGGDRGKNLEVEVALGNHAPHETPSTSASPDAAVNPTTDPGVVPQGTEEGRVAGVERVEGVEEVVFAGGTSGEADADGDELGAGAGLMGDDEALRSMQACLDGEDSELVIEMVGNDNEQLQLDAMMNNLSGLIDDASACVMSAQSCGVSGDKLQSDDRVAEEVKELGAGIGNDRSVCSLDHGSLDGGGGFEEGEIEGDTQNLDADDSGNSELQDDVELEEDFDSRRIEEDGSCGHDLKSNLHLIPQKGNGDTARNMLCNSKGDSQMHVARAQAVSYDEVLDWNETPLPDDKALKHGNTRKRTLTEERKAKKTKTKRIKRALQREAEGVKRLKLQPVIKPKVVKVCHFYLHGKCQQGNLCKFSHDTTPLTKSKPCTHYARGSCLKGDDCPYDHELSKYPCHNFMENGMCIRGDKCKFSHVIPTAEGPSTPDAKKSNASSVPEKANCQEQTSRQKTSTVYSGEPATSVPIKHHSILKNLAGISGNAQKVPVRIPRGIQFLPFNKARPDSSILHQDVVSTEKHKNPTGGPHQNFGRPQPADGKKLGKHNGHRSAPLLDEKDSSKQANLHPCSEPKKNSLPTTAAVPSSVSTQHEVSEASRILQEFLFGSGN</sequence>
<protein>
    <recommendedName>
        <fullName>Zinc finger CCCH domain-containing protein 7</fullName>
        <shortName>OsC3H7</shortName>
    </recommendedName>
</protein>
<organism>
    <name type="scientific">Oryza sativa subsp. japonica</name>
    <name type="common">Rice</name>
    <dbReference type="NCBI Taxonomy" id="39947"/>
    <lineage>
        <taxon>Eukaryota</taxon>
        <taxon>Viridiplantae</taxon>
        <taxon>Streptophyta</taxon>
        <taxon>Embryophyta</taxon>
        <taxon>Tracheophyta</taxon>
        <taxon>Spermatophyta</taxon>
        <taxon>Magnoliopsida</taxon>
        <taxon>Liliopsida</taxon>
        <taxon>Poales</taxon>
        <taxon>Poaceae</taxon>
        <taxon>BOP clade</taxon>
        <taxon>Oryzoideae</taxon>
        <taxon>Oryzeae</taxon>
        <taxon>Oryzinae</taxon>
        <taxon>Oryza</taxon>
        <taxon>Oryza sativa</taxon>
    </lineage>
</organism>
<evidence type="ECO:0000255" key="1">
    <source>
        <dbReference type="PROSITE-ProRule" id="PRU00723"/>
    </source>
</evidence>
<evidence type="ECO:0000256" key="2">
    <source>
        <dbReference type="SAM" id="MobiDB-lite"/>
    </source>
</evidence>
<evidence type="ECO:0000305" key="3"/>
<feature type="chain" id="PRO_0000346804" description="Zinc finger CCCH domain-containing protein 7">
    <location>
        <begin position="1"/>
        <end position="698"/>
    </location>
</feature>
<feature type="zinc finger region" description="C3H1-type 1" evidence="1">
    <location>
        <begin position="429"/>
        <end position="456"/>
    </location>
</feature>
<feature type="zinc finger region" description="C3H1-type 2" evidence="1">
    <location>
        <begin position="458"/>
        <end position="485"/>
    </location>
</feature>
<feature type="zinc finger region" description="C3H1-type 3" evidence="1">
    <location>
        <begin position="486"/>
        <end position="511"/>
    </location>
</feature>
<feature type="region of interest" description="Disordered" evidence="2">
    <location>
        <begin position="1"/>
        <end position="23"/>
    </location>
</feature>
<feature type="region of interest" description="Disordered" evidence="2">
    <location>
        <begin position="56"/>
        <end position="95"/>
    </location>
</feature>
<feature type="region of interest" description="Disordered" evidence="2">
    <location>
        <begin position="109"/>
        <end position="137"/>
    </location>
</feature>
<feature type="region of interest" description="Disordered" evidence="2">
    <location>
        <begin position="272"/>
        <end position="300"/>
    </location>
</feature>
<feature type="region of interest" description="Disordered" evidence="2">
    <location>
        <begin position="512"/>
        <end position="553"/>
    </location>
</feature>
<feature type="region of interest" description="Disordered" evidence="2">
    <location>
        <begin position="607"/>
        <end position="682"/>
    </location>
</feature>
<feature type="compositionally biased region" description="Pro residues" evidence="2">
    <location>
        <begin position="1"/>
        <end position="11"/>
    </location>
</feature>
<feature type="compositionally biased region" description="Low complexity" evidence="2">
    <location>
        <begin position="12"/>
        <end position="21"/>
    </location>
</feature>
<feature type="compositionally biased region" description="Low complexity" evidence="2">
    <location>
        <begin position="65"/>
        <end position="74"/>
    </location>
</feature>
<feature type="compositionally biased region" description="Acidic residues" evidence="2">
    <location>
        <begin position="281"/>
        <end position="300"/>
    </location>
</feature>
<feature type="compositionally biased region" description="Polar residues" evidence="2">
    <location>
        <begin position="535"/>
        <end position="548"/>
    </location>
</feature>
<feature type="compositionally biased region" description="Polar residues" evidence="2">
    <location>
        <begin position="665"/>
        <end position="680"/>
    </location>
</feature>
<reference key="1">
    <citation type="journal article" date="2002" name="Nature">
        <title>The genome sequence and structure of rice chromosome 1.</title>
        <authorList>
            <person name="Sasaki T."/>
            <person name="Matsumoto T."/>
            <person name="Yamamoto K."/>
            <person name="Sakata K."/>
            <person name="Baba T."/>
            <person name="Katayose Y."/>
            <person name="Wu J."/>
            <person name="Niimura Y."/>
            <person name="Cheng Z."/>
            <person name="Nagamura Y."/>
            <person name="Antonio B.A."/>
            <person name="Kanamori H."/>
            <person name="Hosokawa S."/>
            <person name="Masukawa M."/>
            <person name="Arikawa K."/>
            <person name="Chiden Y."/>
            <person name="Hayashi M."/>
            <person name="Okamoto M."/>
            <person name="Ando T."/>
            <person name="Aoki H."/>
            <person name="Arita K."/>
            <person name="Hamada M."/>
            <person name="Harada C."/>
            <person name="Hijishita S."/>
            <person name="Honda M."/>
            <person name="Ichikawa Y."/>
            <person name="Idonuma A."/>
            <person name="Iijima M."/>
            <person name="Ikeda M."/>
            <person name="Ikeno M."/>
            <person name="Ito S."/>
            <person name="Ito T."/>
            <person name="Ito Y."/>
            <person name="Ito Y."/>
            <person name="Iwabuchi A."/>
            <person name="Kamiya K."/>
            <person name="Karasawa W."/>
            <person name="Katagiri S."/>
            <person name="Kikuta A."/>
            <person name="Kobayashi N."/>
            <person name="Kono I."/>
            <person name="Machita K."/>
            <person name="Maehara T."/>
            <person name="Mizuno H."/>
            <person name="Mizubayashi T."/>
            <person name="Mukai Y."/>
            <person name="Nagasaki H."/>
            <person name="Nakashima M."/>
            <person name="Nakama Y."/>
            <person name="Nakamichi Y."/>
            <person name="Nakamura M."/>
            <person name="Namiki N."/>
            <person name="Negishi M."/>
            <person name="Ohta I."/>
            <person name="Ono N."/>
            <person name="Saji S."/>
            <person name="Sakai K."/>
            <person name="Shibata M."/>
            <person name="Shimokawa T."/>
            <person name="Shomura A."/>
            <person name="Song J."/>
            <person name="Takazaki Y."/>
            <person name="Terasawa K."/>
            <person name="Tsuji K."/>
            <person name="Waki K."/>
            <person name="Yamagata H."/>
            <person name="Yamane H."/>
            <person name="Yoshiki S."/>
            <person name="Yoshihara R."/>
            <person name="Yukawa K."/>
            <person name="Zhong H."/>
            <person name="Iwama H."/>
            <person name="Endo T."/>
            <person name="Ito H."/>
            <person name="Hahn J.H."/>
            <person name="Kim H.-I."/>
            <person name="Eun M.-Y."/>
            <person name="Yano M."/>
            <person name="Jiang J."/>
            <person name="Gojobori T."/>
        </authorList>
    </citation>
    <scope>NUCLEOTIDE SEQUENCE [LARGE SCALE GENOMIC DNA]</scope>
    <source>
        <strain>cv. Nipponbare</strain>
    </source>
</reference>
<reference key="2">
    <citation type="journal article" date="2005" name="Nature">
        <title>The map-based sequence of the rice genome.</title>
        <authorList>
            <consortium name="International rice genome sequencing project (IRGSP)"/>
        </authorList>
    </citation>
    <scope>NUCLEOTIDE SEQUENCE [LARGE SCALE GENOMIC DNA]</scope>
    <source>
        <strain>cv. Nipponbare</strain>
    </source>
</reference>
<reference key="3">
    <citation type="journal article" date="2008" name="Nucleic Acids Res.">
        <title>The rice annotation project database (RAP-DB): 2008 update.</title>
        <authorList>
            <consortium name="The rice annotation project (RAP)"/>
        </authorList>
    </citation>
    <scope>GENOME REANNOTATION</scope>
    <source>
        <strain>cv. Nipponbare</strain>
    </source>
</reference>
<reference key="4">
    <citation type="journal article" date="2013" name="Rice">
        <title>Improvement of the Oryza sativa Nipponbare reference genome using next generation sequence and optical map data.</title>
        <authorList>
            <person name="Kawahara Y."/>
            <person name="de la Bastide M."/>
            <person name="Hamilton J.P."/>
            <person name="Kanamori H."/>
            <person name="McCombie W.R."/>
            <person name="Ouyang S."/>
            <person name="Schwartz D.C."/>
            <person name="Tanaka T."/>
            <person name="Wu J."/>
            <person name="Zhou S."/>
            <person name="Childs K.L."/>
            <person name="Davidson R.M."/>
            <person name="Lin H."/>
            <person name="Quesada-Ocampo L."/>
            <person name="Vaillancourt B."/>
            <person name="Sakai H."/>
            <person name="Lee S.S."/>
            <person name="Kim J."/>
            <person name="Numa H."/>
            <person name="Itoh T."/>
            <person name="Buell C.R."/>
            <person name="Matsumoto T."/>
        </authorList>
    </citation>
    <scope>GENOME REANNOTATION</scope>
    <source>
        <strain>cv. Nipponbare</strain>
    </source>
</reference>
<reference key="5">
    <citation type="journal article" date="2008" name="BMC Genomics">
        <title>Genome-wide analysis of CCCH zinc finger family in Arabidopsis and rice.</title>
        <authorList>
            <person name="Wang D."/>
            <person name="Guo Y."/>
            <person name="Wu C."/>
            <person name="Yang G."/>
            <person name="Li Y."/>
            <person name="Zheng C."/>
        </authorList>
    </citation>
    <scope>NOMENCLATURE</scope>
</reference>
<proteinExistence type="evidence at transcript level"/>
<name>C3H7_ORYSJ</name>